<organism>
    <name type="scientific">Staphylococcus aureus (strain COL)</name>
    <dbReference type="NCBI Taxonomy" id="93062"/>
    <lineage>
        <taxon>Bacteria</taxon>
        <taxon>Bacillati</taxon>
        <taxon>Bacillota</taxon>
        <taxon>Bacilli</taxon>
        <taxon>Bacillales</taxon>
        <taxon>Staphylococcaceae</taxon>
        <taxon>Staphylococcus</taxon>
    </lineage>
</organism>
<dbReference type="EC" id="4.2.3.4" evidence="1"/>
<dbReference type="EMBL" id="CP000046">
    <property type="protein sequence ID" value="AAW36700.1"/>
    <property type="molecule type" value="Genomic_DNA"/>
</dbReference>
<dbReference type="RefSeq" id="WP_000776323.1">
    <property type="nucleotide sequence ID" value="NZ_JBGOFO010000003.1"/>
</dbReference>
<dbReference type="SMR" id="Q5HFV8"/>
<dbReference type="KEGG" id="sac:SACOL1505"/>
<dbReference type="HOGENOM" id="CLU_001201_0_1_9"/>
<dbReference type="UniPathway" id="UPA00053">
    <property type="reaction ID" value="UER00085"/>
</dbReference>
<dbReference type="Proteomes" id="UP000000530">
    <property type="component" value="Chromosome"/>
</dbReference>
<dbReference type="GO" id="GO:0005737">
    <property type="term" value="C:cytoplasm"/>
    <property type="evidence" value="ECO:0007669"/>
    <property type="project" value="UniProtKB-SubCell"/>
</dbReference>
<dbReference type="GO" id="GO:0003856">
    <property type="term" value="F:3-dehydroquinate synthase activity"/>
    <property type="evidence" value="ECO:0007669"/>
    <property type="project" value="UniProtKB-UniRule"/>
</dbReference>
<dbReference type="GO" id="GO:0046872">
    <property type="term" value="F:metal ion binding"/>
    <property type="evidence" value="ECO:0007669"/>
    <property type="project" value="UniProtKB-KW"/>
</dbReference>
<dbReference type="GO" id="GO:0000166">
    <property type="term" value="F:nucleotide binding"/>
    <property type="evidence" value="ECO:0007669"/>
    <property type="project" value="UniProtKB-KW"/>
</dbReference>
<dbReference type="GO" id="GO:0008652">
    <property type="term" value="P:amino acid biosynthetic process"/>
    <property type="evidence" value="ECO:0007669"/>
    <property type="project" value="UniProtKB-KW"/>
</dbReference>
<dbReference type="GO" id="GO:0009073">
    <property type="term" value="P:aromatic amino acid family biosynthetic process"/>
    <property type="evidence" value="ECO:0007669"/>
    <property type="project" value="UniProtKB-KW"/>
</dbReference>
<dbReference type="GO" id="GO:0009423">
    <property type="term" value="P:chorismate biosynthetic process"/>
    <property type="evidence" value="ECO:0007669"/>
    <property type="project" value="UniProtKB-UniRule"/>
</dbReference>
<dbReference type="FunFam" id="1.20.1090.10:FF:000016">
    <property type="entry name" value="3-dehydroquinate synthase"/>
    <property type="match status" value="1"/>
</dbReference>
<dbReference type="FunFam" id="3.40.50.1970:FF:000019">
    <property type="entry name" value="3-dehydroquinate synthase"/>
    <property type="match status" value="1"/>
</dbReference>
<dbReference type="Gene3D" id="3.40.50.1970">
    <property type="match status" value="1"/>
</dbReference>
<dbReference type="Gene3D" id="1.20.1090.10">
    <property type="entry name" value="Dehydroquinate synthase-like - alpha domain"/>
    <property type="match status" value="1"/>
</dbReference>
<dbReference type="HAMAP" id="MF_00110">
    <property type="entry name" value="DHQ_synthase"/>
    <property type="match status" value="1"/>
</dbReference>
<dbReference type="InterPro" id="IPR050071">
    <property type="entry name" value="Dehydroquinate_synthase"/>
</dbReference>
<dbReference type="InterPro" id="IPR016037">
    <property type="entry name" value="DHQ_synth_AroB"/>
</dbReference>
<dbReference type="InterPro" id="IPR030963">
    <property type="entry name" value="DHQ_synth_fam"/>
</dbReference>
<dbReference type="InterPro" id="IPR030960">
    <property type="entry name" value="DHQS/DOIS_N"/>
</dbReference>
<dbReference type="InterPro" id="IPR056179">
    <property type="entry name" value="DHQS_C"/>
</dbReference>
<dbReference type="NCBIfam" id="TIGR01357">
    <property type="entry name" value="aroB"/>
    <property type="match status" value="1"/>
</dbReference>
<dbReference type="PANTHER" id="PTHR43622">
    <property type="entry name" value="3-DEHYDROQUINATE SYNTHASE"/>
    <property type="match status" value="1"/>
</dbReference>
<dbReference type="PANTHER" id="PTHR43622:SF7">
    <property type="entry name" value="3-DEHYDROQUINATE SYNTHASE, CHLOROPLASTIC"/>
    <property type="match status" value="1"/>
</dbReference>
<dbReference type="Pfam" id="PF01761">
    <property type="entry name" value="DHQ_synthase"/>
    <property type="match status" value="1"/>
</dbReference>
<dbReference type="Pfam" id="PF24621">
    <property type="entry name" value="DHQS_C"/>
    <property type="match status" value="1"/>
</dbReference>
<dbReference type="PIRSF" id="PIRSF001455">
    <property type="entry name" value="DHQ_synth"/>
    <property type="match status" value="1"/>
</dbReference>
<dbReference type="SUPFAM" id="SSF56796">
    <property type="entry name" value="Dehydroquinate synthase-like"/>
    <property type="match status" value="1"/>
</dbReference>
<reference key="1">
    <citation type="journal article" date="2005" name="J. Bacteriol.">
        <title>Insights on evolution of virulence and resistance from the complete genome analysis of an early methicillin-resistant Staphylococcus aureus strain and a biofilm-producing methicillin-resistant Staphylococcus epidermidis strain.</title>
        <authorList>
            <person name="Gill S.R."/>
            <person name="Fouts D.E."/>
            <person name="Archer G.L."/>
            <person name="Mongodin E.F."/>
            <person name="DeBoy R.T."/>
            <person name="Ravel J."/>
            <person name="Paulsen I.T."/>
            <person name="Kolonay J.F."/>
            <person name="Brinkac L.M."/>
            <person name="Beanan M.J."/>
            <person name="Dodson R.J."/>
            <person name="Daugherty S.C."/>
            <person name="Madupu R."/>
            <person name="Angiuoli S.V."/>
            <person name="Durkin A.S."/>
            <person name="Haft D.H."/>
            <person name="Vamathevan J.J."/>
            <person name="Khouri H."/>
            <person name="Utterback T.R."/>
            <person name="Lee C."/>
            <person name="Dimitrov G."/>
            <person name="Jiang L."/>
            <person name="Qin H."/>
            <person name="Weidman J."/>
            <person name="Tran K."/>
            <person name="Kang K.H."/>
            <person name="Hance I.R."/>
            <person name="Nelson K.E."/>
            <person name="Fraser C.M."/>
        </authorList>
    </citation>
    <scope>NUCLEOTIDE SEQUENCE [LARGE SCALE GENOMIC DNA]</scope>
    <source>
        <strain>COL</strain>
    </source>
</reference>
<gene>
    <name evidence="1" type="primary">aroB</name>
    <name type="ordered locus">SACOL1505</name>
</gene>
<feature type="chain" id="PRO_0000140779" description="3-dehydroquinate synthase">
    <location>
        <begin position="1"/>
        <end position="354"/>
    </location>
</feature>
<feature type="binding site" evidence="1">
    <location>
        <begin position="100"/>
        <end position="104"/>
    </location>
    <ligand>
        <name>NAD(+)</name>
        <dbReference type="ChEBI" id="CHEBI:57540"/>
    </ligand>
</feature>
<feature type="binding site" evidence="1">
    <location>
        <begin position="124"/>
        <end position="125"/>
    </location>
    <ligand>
        <name>NAD(+)</name>
        <dbReference type="ChEBI" id="CHEBI:57540"/>
    </ligand>
</feature>
<feature type="binding site" evidence="1">
    <location>
        <position position="136"/>
    </location>
    <ligand>
        <name>NAD(+)</name>
        <dbReference type="ChEBI" id="CHEBI:57540"/>
    </ligand>
</feature>
<feature type="binding site" evidence="1">
    <location>
        <position position="145"/>
    </location>
    <ligand>
        <name>NAD(+)</name>
        <dbReference type="ChEBI" id="CHEBI:57540"/>
    </ligand>
</feature>
<feature type="binding site" evidence="1">
    <location>
        <begin position="163"/>
        <end position="166"/>
    </location>
    <ligand>
        <name>NAD(+)</name>
        <dbReference type="ChEBI" id="CHEBI:57540"/>
    </ligand>
</feature>
<feature type="binding site" evidence="1">
    <location>
        <position position="178"/>
    </location>
    <ligand>
        <name>Zn(2+)</name>
        <dbReference type="ChEBI" id="CHEBI:29105"/>
    </ligand>
</feature>
<feature type="binding site" evidence="1">
    <location>
        <position position="242"/>
    </location>
    <ligand>
        <name>Zn(2+)</name>
        <dbReference type="ChEBI" id="CHEBI:29105"/>
    </ligand>
</feature>
<feature type="binding site" evidence="1">
    <location>
        <position position="256"/>
    </location>
    <ligand>
        <name>Zn(2+)</name>
        <dbReference type="ChEBI" id="CHEBI:29105"/>
    </ligand>
</feature>
<accession>Q5HFV8</accession>
<proteinExistence type="inferred from homology"/>
<keyword id="KW-0028">Amino-acid biosynthesis</keyword>
<keyword id="KW-0057">Aromatic amino acid biosynthesis</keyword>
<keyword id="KW-0170">Cobalt</keyword>
<keyword id="KW-0963">Cytoplasm</keyword>
<keyword id="KW-0456">Lyase</keyword>
<keyword id="KW-0479">Metal-binding</keyword>
<keyword id="KW-0520">NAD</keyword>
<keyword id="KW-0547">Nucleotide-binding</keyword>
<keyword id="KW-0862">Zinc</keyword>
<evidence type="ECO:0000255" key="1">
    <source>
        <dbReference type="HAMAP-Rule" id="MF_00110"/>
    </source>
</evidence>
<name>AROB_STAAC</name>
<protein>
    <recommendedName>
        <fullName evidence="1">3-dehydroquinate synthase</fullName>
        <shortName evidence="1">DHQS</shortName>
        <ecNumber evidence="1">4.2.3.4</ecNumber>
    </recommendedName>
</protein>
<comment type="function">
    <text evidence="1">Catalyzes the conversion of 3-deoxy-D-arabino-heptulosonate 7-phosphate (DAHP) to dehydroquinate (DHQ).</text>
</comment>
<comment type="catalytic activity">
    <reaction evidence="1">
        <text>7-phospho-2-dehydro-3-deoxy-D-arabino-heptonate = 3-dehydroquinate + phosphate</text>
        <dbReference type="Rhea" id="RHEA:21968"/>
        <dbReference type="ChEBI" id="CHEBI:32364"/>
        <dbReference type="ChEBI" id="CHEBI:43474"/>
        <dbReference type="ChEBI" id="CHEBI:58394"/>
        <dbReference type="EC" id="4.2.3.4"/>
    </reaction>
</comment>
<comment type="cofactor">
    <cofactor evidence="1">
        <name>NAD(+)</name>
        <dbReference type="ChEBI" id="CHEBI:57540"/>
    </cofactor>
</comment>
<comment type="cofactor">
    <cofactor evidence="1">
        <name>Co(2+)</name>
        <dbReference type="ChEBI" id="CHEBI:48828"/>
    </cofactor>
    <cofactor evidence="1">
        <name>Zn(2+)</name>
        <dbReference type="ChEBI" id="CHEBI:29105"/>
    </cofactor>
    <text evidence="1">Binds 1 divalent metal cation per subunit. Can use either Co(2+) or Zn(2+).</text>
</comment>
<comment type="pathway">
    <text evidence="1">Metabolic intermediate biosynthesis; chorismate biosynthesis; chorismate from D-erythrose 4-phosphate and phosphoenolpyruvate: step 2/7.</text>
</comment>
<comment type="subcellular location">
    <subcellularLocation>
        <location evidence="1">Cytoplasm</location>
    </subcellularLocation>
</comment>
<comment type="similarity">
    <text evidence="1">Belongs to the sugar phosphate cyclases superfamily. Dehydroquinate synthase family.</text>
</comment>
<sequence length="354" mass="40316">MKLQTTYPSNNYPIYVEHGAIDHISTYIDQFDQSFILIDEHVNQYFADKFDDILSYENVHKVIIPAGEKTKTFEQYQETLEYILSHHVTRNTAIIAVGGGATGDFAGFIAATLLRGVHFIQVPTTILAHDSSVGGKVGINSKQGKNLIGAFYRPTAVIYDLDFLKTLPFEQILSGYAEVYKHALLNGESATQDIEQHFKDREILQSLNGMDKYIAKGIETKLDIVIADEKEQGVRKFLNLGHTFGHAVEYYHKIPHGHAVMVGIIYQFIVANALFDSKHDINHYIQYLIQLGYPLDMITDLDFETLYQYMLSDKKNDKQGVQMVLIRQFGDIVVQHVDQLTLQHACEQLKTYFK</sequence>